<keyword id="KW-0067">ATP-binding</keyword>
<keyword id="KW-0963">Cytoplasm</keyword>
<keyword id="KW-0227">DNA damage</keyword>
<keyword id="KW-0234">DNA repair</keyword>
<keyword id="KW-0235">DNA replication</keyword>
<keyword id="KW-0238">DNA-binding</keyword>
<keyword id="KW-0547">Nucleotide-binding</keyword>
<keyword id="KW-0742">SOS response</keyword>
<protein>
    <recommendedName>
        <fullName evidence="1">DNA replication and repair protein RecF</fullName>
    </recommendedName>
</protein>
<feature type="chain" id="PRO_1000048509" description="DNA replication and repair protein RecF">
    <location>
        <begin position="1"/>
        <end position="404"/>
    </location>
</feature>
<feature type="binding site" evidence="1">
    <location>
        <begin position="30"/>
        <end position="37"/>
    </location>
    <ligand>
        <name>ATP</name>
        <dbReference type="ChEBI" id="CHEBI:30616"/>
    </ligand>
</feature>
<accession>A5CLT6</accession>
<name>RECF_CLAM3</name>
<comment type="function">
    <text evidence="1">The RecF protein is involved in DNA metabolism; it is required for DNA replication and normal SOS inducibility. RecF binds preferentially to single-stranded, linear DNA. It also seems to bind ATP.</text>
</comment>
<comment type="subcellular location">
    <subcellularLocation>
        <location evidence="1">Cytoplasm</location>
    </subcellularLocation>
</comment>
<comment type="similarity">
    <text evidence="1">Belongs to the RecF family.</text>
</comment>
<proteinExistence type="inferred from homology"/>
<reference key="1">
    <citation type="journal article" date="2008" name="J. Bacteriol.">
        <title>The genome sequence of the tomato-pathogenic actinomycete Clavibacter michiganensis subsp. michiganensis NCPPB382 reveals a large island involved in pathogenicity.</title>
        <authorList>
            <person name="Gartemann K.-H."/>
            <person name="Abt B."/>
            <person name="Bekel T."/>
            <person name="Burger A."/>
            <person name="Engemann J."/>
            <person name="Fluegel M."/>
            <person name="Gaigalat L."/>
            <person name="Goesmann A."/>
            <person name="Graefen I."/>
            <person name="Kalinowski J."/>
            <person name="Kaup O."/>
            <person name="Kirchner O."/>
            <person name="Krause L."/>
            <person name="Linke B."/>
            <person name="McHardy A."/>
            <person name="Meyer F."/>
            <person name="Pohle S."/>
            <person name="Rueckert C."/>
            <person name="Schneiker S."/>
            <person name="Zellermann E.-M."/>
            <person name="Puehler A."/>
            <person name="Eichenlaub R."/>
            <person name="Kaiser O."/>
            <person name="Bartels D."/>
        </authorList>
    </citation>
    <scope>NUCLEOTIDE SEQUENCE [LARGE SCALE GENOMIC DNA]</scope>
    <source>
        <strain>NCPPB 382</strain>
    </source>
</reference>
<sequence>MIVRHLSLGDFRNYTRADVALLPGATLFVGSNGQGKTNLVEALGFLSTLGSHRVSTDQALIRQGAESAVIRALLQHAGRELRVEVQINRSAANRAQVNSTPTKPRELPRYFSSVLFAPEDLALVRGDPSGRRRLLDQLLVLRTPRLAGVLSDYDRALKQRNTLLKSARARGMKADQLGTLDIWDERLVAIGSQIIAARGALVEALQPELARAYLAVAGSDHGPSARPELSILADDPGEDDIADETGARDGGRFTRSDDVVPVFTAAIARMRPRELERGLTLVGPHRDDVLFRLNGLPAKGYASHGESWSFALALKLASAELLRRDSQTGDPVLILDDVFAELDQARRGRLAEAVTGFEQVLITAAVFEDVPAHLAANAVHIRAGEIVDAPAPASEPDAEGGGAA</sequence>
<organism>
    <name type="scientific">Clavibacter michiganensis subsp. michiganensis (strain NCPPB 382)</name>
    <dbReference type="NCBI Taxonomy" id="443906"/>
    <lineage>
        <taxon>Bacteria</taxon>
        <taxon>Bacillati</taxon>
        <taxon>Actinomycetota</taxon>
        <taxon>Actinomycetes</taxon>
        <taxon>Micrococcales</taxon>
        <taxon>Microbacteriaceae</taxon>
        <taxon>Clavibacter</taxon>
    </lineage>
</organism>
<gene>
    <name evidence="1" type="primary">recF</name>
    <name type="ordered locus">CMM_0004</name>
</gene>
<evidence type="ECO:0000255" key="1">
    <source>
        <dbReference type="HAMAP-Rule" id="MF_00365"/>
    </source>
</evidence>
<dbReference type="EMBL" id="AM711867">
    <property type="protein sequence ID" value="CAN00009.1"/>
    <property type="molecule type" value="Genomic_DNA"/>
</dbReference>
<dbReference type="RefSeq" id="WP_011931223.1">
    <property type="nucleotide sequence ID" value="NC_009480.1"/>
</dbReference>
<dbReference type="SMR" id="A5CLT6"/>
<dbReference type="KEGG" id="cmi:CMM_0004"/>
<dbReference type="eggNOG" id="COG1195">
    <property type="taxonomic scope" value="Bacteria"/>
</dbReference>
<dbReference type="HOGENOM" id="CLU_040267_1_1_11"/>
<dbReference type="OrthoDB" id="9803889at2"/>
<dbReference type="Proteomes" id="UP000001564">
    <property type="component" value="Chromosome"/>
</dbReference>
<dbReference type="GO" id="GO:0005737">
    <property type="term" value="C:cytoplasm"/>
    <property type="evidence" value="ECO:0007669"/>
    <property type="project" value="UniProtKB-SubCell"/>
</dbReference>
<dbReference type="GO" id="GO:0005524">
    <property type="term" value="F:ATP binding"/>
    <property type="evidence" value="ECO:0007669"/>
    <property type="project" value="UniProtKB-UniRule"/>
</dbReference>
<dbReference type="GO" id="GO:0003697">
    <property type="term" value="F:single-stranded DNA binding"/>
    <property type="evidence" value="ECO:0007669"/>
    <property type="project" value="UniProtKB-UniRule"/>
</dbReference>
<dbReference type="GO" id="GO:0006260">
    <property type="term" value="P:DNA replication"/>
    <property type="evidence" value="ECO:0007669"/>
    <property type="project" value="UniProtKB-UniRule"/>
</dbReference>
<dbReference type="GO" id="GO:0000731">
    <property type="term" value="P:DNA synthesis involved in DNA repair"/>
    <property type="evidence" value="ECO:0007669"/>
    <property type="project" value="TreeGrafter"/>
</dbReference>
<dbReference type="GO" id="GO:0006302">
    <property type="term" value="P:double-strand break repair"/>
    <property type="evidence" value="ECO:0007669"/>
    <property type="project" value="TreeGrafter"/>
</dbReference>
<dbReference type="GO" id="GO:0009432">
    <property type="term" value="P:SOS response"/>
    <property type="evidence" value="ECO:0007669"/>
    <property type="project" value="UniProtKB-UniRule"/>
</dbReference>
<dbReference type="Gene3D" id="3.40.50.300">
    <property type="entry name" value="P-loop containing nucleotide triphosphate hydrolases"/>
    <property type="match status" value="1"/>
</dbReference>
<dbReference type="Gene3D" id="1.20.1050.90">
    <property type="entry name" value="RecF/RecN/SMC, N-terminal domain"/>
    <property type="match status" value="1"/>
</dbReference>
<dbReference type="HAMAP" id="MF_00365">
    <property type="entry name" value="RecF"/>
    <property type="match status" value="1"/>
</dbReference>
<dbReference type="InterPro" id="IPR001238">
    <property type="entry name" value="DNA-binding_RecF"/>
</dbReference>
<dbReference type="InterPro" id="IPR018078">
    <property type="entry name" value="DNA-binding_RecF_CS"/>
</dbReference>
<dbReference type="InterPro" id="IPR027417">
    <property type="entry name" value="P-loop_NTPase"/>
</dbReference>
<dbReference type="InterPro" id="IPR003395">
    <property type="entry name" value="RecF/RecN/SMC_N"/>
</dbReference>
<dbReference type="InterPro" id="IPR042174">
    <property type="entry name" value="RecF_2"/>
</dbReference>
<dbReference type="NCBIfam" id="TIGR00611">
    <property type="entry name" value="recf"/>
    <property type="match status" value="1"/>
</dbReference>
<dbReference type="PANTHER" id="PTHR32182">
    <property type="entry name" value="DNA REPLICATION AND REPAIR PROTEIN RECF"/>
    <property type="match status" value="1"/>
</dbReference>
<dbReference type="PANTHER" id="PTHR32182:SF0">
    <property type="entry name" value="DNA REPLICATION AND REPAIR PROTEIN RECF"/>
    <property type="match status" value="1"/>
</dbReference>
<dbReference type="Pfam" id="PF02463">
    <property type="entry name" value="SMC_N"/>
    <property type="match status" value="1"/>
</dbReference>
<dbReference type="SUPFAM" id="SSF52540">
    <property type="entry name" value="P-loop containing nucleoside triphosphate hydrolases"/>
    <property type="match status" value="1"/>
</dbReference>
<dbReference type="PROSITE" id="PS00618">
    <property type="entry name" value="RECF_2"/>
    <property type="match status" value="1"/>
</dbReference>